<protein>
    <recommendedName>
        <fullName evidence="2">Formamidopyrimidine-DNA glycosylase</fullName>
        <shortName evidence="2">Fapy-DNA glycosylase</shortName>
        <ecNumber evidence="2">3.2.2.23</ecNumber>
    </recommendedName>
    <alternativeName>
        <fullName evidence="2">DNA-(apurinic or apyrimidinic site) lyase MutM</fullName>
        <shortName evidence="2">AP lyase MutM</shortName>
        <ecNumber evidence="2">4.2.99.18</ecNumber>
    </alternativeName>
</protein>
<feature type="initiator methionine" description="Removed" evidence="1">
    <location>
        <position position="1"/>
    </location>
</feature>
<feature type="chain" id="PRO_1000008767" description="Formamidopyrimidine-DNA glycosylase">
    <location>
        <begin position="2"/>
        <end position="271"/>
    </location>
</feature>
<feature type="zinc finger region" description="FPG-type" evidence="2">
    <location>
        <begin position="237"/>
        <end position="271"/>
    </location>
</feature>
<feature type="active site" description="Schiff-base intermediate with DNA" evidence="2">
    <location>
        <position position="2"/>
    </location>
</feature>
<feature type="active site" description="Proton donor" evidence="2">
    <location>
        <position position="3"/>
    </location>
</feature>
<feature type="active site" description="Proton donor; for beta-elimination activity" evidence="2">
    <location>
        <position position="58"/>
    </location>
</feature>
<feature type="active site" description="Proton donor; for delta-elimination activity" evidence="2">
    <location>
        <position position="261"/>
    </location>
</feature>
<feature type="binding site" evidence="2">
    <location>
        <position position="91"/>
    </location>
    <ligand>
        <name>DNA</name>
        <dbReference type="ChEBI" id="CHEBI:16991"/>
    </ligand>
</feature>
<feature type="binding site" evidence="2">
    <location>
        <position position="110"/>
    </location>
    <ligand>
        <name>DNA</name>
        <dbReference type="ChEBI" id="CHEBI:16991"/>
    </ligand>
</feature>
<feature type="binding site" evidence="2">
    <location>
        <position position="152"/>
    </location>
    <ligand>
        <name>DNA</name>
        <dbReference type="ChEBI" id="CHEBI:16991"/>
    </ligand>
</feature>
<reference key="1">
    <citation type="journal article" date="2008" name="PLoS Genet.">
        <title>Complete genome sequence of the complex carbohydrate-degrading marine bacterium, Saccharophagus degradans strain 2-40 T.</title>
        <authorList>
            <person name="Weiner R.M."/>
            <person name="Taylor L.E. II"/>
            <person name="Henrissat B."/>
            <person name="Hauser L."/>
            <person name="Land M."/>
            <person name="Coutinho P.M."/>
            <person name="Rancurel C."/>
            <person name="Saunders E.H."/>
            <person name="Longmire A.G."/>
            <person name="Zhang H."/>
            <person name="Bayer E.A."/>
            <person name="Gilbert H.J."/>
            <person name="Larimer F."/>
            <person name="Zhulin I.B."/>
            <person name="Ekborg N.A."/>
            <person name="Lamed R."/>
            <person name="Richardson P.M."/>
            <person name="Borovok I."/>
            <person name="Hutcheson S."/>
        </authorList>
    </citation>
    <scope>NUCLEOTIDE SEQUENCE [LARGE SCALE GENOMIC DNA]</scope>
    <source>
        <strain>2-40 / ATCC 43961 / DSM 17024</strain>
    </source>
</reference>
<evidence type="ECO:0000250" key="1"/>
<evidence type="ECO:0000255" key="2">
    <source>
        <dbReference type="HAMAP-Rule" id="MF_00103"/>
    </source>
</evidence>
<keyword id="KW-0227">DNA damage</keyword>
<keyword id="KW-0234">DNA repair</keyword>
<keyword id="KW-0238">DNA-binding</keyword>
<keyword id="KW-0326">Glycosidase</keyword>
<keyword id="KW-0378">Hydrolase</keyword>
<keyword id="KW-0456">Lyase</keyword>
<keyword id="KW-0479">Metal-binding</keyword>
<keyword id="KW-0511">Multifunctional enzyme</keyword>
<keyword id="KW-1185">Reference proteome</keyword>
<keyword id="KW-0862">Zinc</keyword>
<keyword id="KW-0863">Zinc-finger</keyword>
<sequence length="271" mass="30365">MPELPEVETTRRGILPHLEGKRVKAVSVRNRSLRWPIPADLAQQIQNKTLRTIHRRGKYLLLEFANGHVIWHLGMSGSLRIIKADEPPMVHDHVDIAFGGNLALRYTDPRRFGAVLWTNEAILEHKLLNHLGPEPLTDAFNSAYLFDKSRKRSQSVKTWIMDSKVVVGVGNIYANEALFNSAIHPLKAAGKLSQKQCDIFCSEIKSVLAKAIEQGGTTLRDFVGGDGKPGYFAQELNVYGRGGKACKKCRKPLTEKKLGQRTTVYCTHCQK</sequence>
<comment type="function">
    <text evidence="2">Involved in base excision repair of DNA damaged by oxidation or by mutagenic agents. Acts as a DNA glycosylase that recognizes and removes damaged bases. Has a preference for oxidized purines, such as 7,8-dihydro-8-oxoguanine (8-oxoG). Has AP (apurinic/apyrimidinic) lyase activity and introduces nicks in the DNA strand. Cleaves the DNA backbone by beta-delta elimination to generate a single-strand break at the site of the removed base with both 3'- and 5'-phosphates.</text>
</comment>
<comment type="catalytic activity">
    <reaction evidence="2">
        <text>Hydrolysis of DNA containing ring-opened 7-methylguanine residues, releasing 2,6-diamino-4-hydroxy-5-(N-methyl)formamidopyrimidine.</text>
        <dbReference type="EC" id="3.2.2.23"/>
    </reaction>
</comment>
<comment type="catalytic activity">
    <reaction evidence="2">
        <text>2'-deoxyribonucleotide-(2'-deoxyribose 5'-phosphate)-2'-deoxyribonucleotide-DNA = a 3'-end 2'-deoxyribonucleotide-(2,3-dehydro-2,3-deoxyribose 5'-phosphate)-DNA + a 5'-end 5'-phospho-2'-deoxyribonucleoside-DNA + H(+)</text>
        <dbReference type="Rhea" id="RHEA:66592"/>
        <dbReference type="Rhea" id="RHEA-COMP:13180"/>
        <dbReference type="Rhea" id="RHEA-COMP:16897"/>
        <dbReference type="Rhea" id="RHEA-COMP:17067"/>
        <dbReference type="ChEBI" id="CHEBI:15378"/>
        <dbReference type="ChEBI" id="CHEBI:136412"/>
        <dbReference type="ChEBI" id="CHEBI:157695"/>
        <dbReference type="ChEBI" id="CHEBI:167181"/>
        <dbReference type="EC" id="4.2.99.18"/>
    </reaction>
</comment>
<comment type="cofactor">
    <cofactor evidence="2">
        <name>Zn(2+)</name>
        <dbReference type="ChEBI" id="CHEBI:29105"/>
    </cofactor>
    <text evidence="2">Binds 1 zinc ion per subunit.</text>
</comment>
<comment type="subunit">
    <text evidence="2">Monomer.</text>
</comment>
<comment type="similarity">
    <text evidence="2">Belongs to the FPG family.</text>
</comment>
<proteinExistence type="inferred from homology"/>
<organism>
    <name type="scientific">Saccharophagus degradans (strain 2-40 / ATCC 43961 / DSM 17024)</name>
    <dbReference type="NCBI Taxonomy" id="203122"/>
    <lineage>
        <taxon>Bacteria</taxon>
        <taxon>Pseudomonadati</taxon>
        <taxon>Pseudomonadota</taxon>
        <taxon>Gammaproteobacteria</taxon>
        <taxon>Cellvibrionales</taxon>
        <taxon>Cellvibrionaceae</taxon>
        <taxon>Saccharophagus</taxon>
    </lineage>
</organism>
<name>FPG_SACD2</name>
<gene>
    <name evidence="2" type="primary">mutM</name>
    <name evidence="2" type="synonym">fpg</name>
    <name type="ordered locus">Sde_3681</name>
</gene>
<dbReference type="EC" id="3.2.2.23" evidence="2"/>
<dbReference type="EC" id="4.2.99.18" evidence="2"/>
<dbReference type="EMBL" id="CP000282">
    <property type="protein sequence ID" value="ABD82936.1"/>
    <property type="molecule type" value="Genomic_DNA"/>
</dbReference>
<dbReference type="RefSeq" id="WP_011470151.1">
    <property type="nucleotide sequence ID" value="NC_007912.1"/>
</dbReference>
<dbReference type="SMR" id="Q21EE3"/>
<dbReference type="STRING" id="203122.Sde_3681"/>
<dbReference type="GeneID" id="98615291"/>
<dbReference type="KEGG" id="sde:Sde_3681"/>
<dbReference type="eggNOG" id="COG0266">
    <property type="taxonomic scope" value="Bacteria"/>
</dbReference>
<dbReference type="HOGENOM" id="CLU_038423_1_1_6"/>
<dbReference type="OrthoDB" id="9800855at2"/>
<dbReference type="Proteomes" id="UP000001947">
    <property type="component" value="Chromosome"/>
</dbReference>
<dbReference type="GO" id="GO:0034039">
    <property type="term" value="F:8-oxo-7,8-dihydroguanine DNA N-glycosylase activity"/>
    <property type="evidence" value="ECO:0007669"/>
    <property type="project" value="TreeGrafter"/>
</dbReference>
<dbReference type="GO" id="GO:0140078">
    <property type="term" value="F:class I DNA-(apurinic or apyrimidinic site) endonuclease activity"/>
    <property type="evidence" value="ECO:0007669"/>
    <property type="project" value="UniProtKB-EC"/>
</dbReference>
<dbReference type="GO" id="GO:0003684">
    <property type="term" value="F:damaged DNA binding"/>
    <property type="evidence" value="ECO:0007669"/>
    <property type="project" value="InterPro"/>
</dbReference>
<dbReference type="GO" id="GO:0008270">
    <property type="term" value="F:zinc ion binding"/>
    <property type="evidence" value="ECO:0007669"/>
    <property type="project" value="UniProtKB-UniRule"/>
</dbReference>
<dbReference type="GO" id="GO:0006284">
    <property type="term" value="P:base-excision repair"/>
    <property type="evidence" value="ECO:0007669"/>
    <property type="project" value="InterPro"/>
</dbReference>
<dbReference type="CDD" id="cd08966">
    <property type="entry name" value="EcFpg-like_N"/>
    <property type="match status" value="1"/>
</dbReference>
<dbReference type="FunFam" id="1.10.8.50:FF:000003">
    <property type="entry name" value="Formamidopyrimidine-DNA glycosylase"/>
    <property type="match status" value="1"/>
</dbReference>
<dbReference type="FunFam" id="3.20.190.10:FF:000001">
    <property type="entry name" value="Formamidopyrimidine-DNA glycosylase"/>
    <property type="match status" value="1"/>
</dbReference>
<dbReference type="Gene3D" id="1.10.8.50">
    <property type="match status" value="1"/>
</dbReference>
<dbReference type="Gene3D" id="3.20.190.10">
    <property type="entry name" value="MutM-like, N-terminal"/>
    <property type="match status" value="1"/>
</dbReference>
<dbReference type="HAMAP" id="MF_00103">
    <property type="entry name" value="Fapy_DNA_glycosyl"/>
    <property type="match status" value="1"/>
</dbReference>
<dbReference type="InterPro" id="IPR015886">
    <property type="entry name" value="DNA_glyclase/AP_lyase_DNA-bd"/>
</dbReference>
<dbReference type="InterPro" id="IPR020629">
    <property type="entry name" value="Formamido-pyr_DNA_Glyclase"/>
</dbReference>
<dbReference type="InterPro" id="IPR012319">
    <property type="entry name" value="FPG_cat"/>
</dbReference>
<dbReference type="InterPro" id="IPR035937">
    <property type="entry name" value="MutM-like_N-ter"/>
</dbReference>
<dbReference type="InterPro" id="IPR010979">
    <property type="entry name" value="Ribosomal_uS13-like_H2TH"/>
</dbReference>
<dbReference type="InterPro" id="IPR000214">
    <property type="entry name" value="Znf_DNA_glyclase/AP_lyase"/>
</dbReference>
<dbReference type="InterPro" id="IPR010663">
    <property type="entry name" value="Znf_FPG/IleRS"/>
</dbReference>
<dbReference type="NCBIfam" id="TIGR00577">
    <property type="entry name" value="fpg"/>
    <property type="match status" value="1"/>
</dbReference>
<dbReference type="NCBIfam" id="NF002211">
    <property type="entry name" value="PRK01103.1"/>
    <property type="match status" value="1"/>
</dbReference>
<dbReference type="PANTHER" id="PTHR22993">
    <property type="entry name" value="FORMAMIDOPYRIMIDINE-DNA GLYCOSYLASE"/>
    <property type="match status" value="1"/>
</dbReference>
<dbReference type="PANTHER" id="PTHR22993:SF9">
    <property type="entry name" value="FORMAMIDOPYRIMIDINE-DNA GLYCOSYLASE"/>
    <property type="match status" value="1"/>
</dbReference>
<dbReference type="Pfam" id="PF01149">
    <property type="entry name" value="Fapy_DNA_glyco"/>
    <property type="match status" value="1"/>
</dbReference>
<dbReference type="Pfam" id="PF06831">
    <property type="entry name" value="H2TH"/>
    <property type="match status" value="1"/>
</dbReference>
<dbReference type="Pfam" id="PF06827">
    <property type="entry name" value="zf-FPG_IleRS"/>
    <property type="match status" value="1"/>
</dbReference>
<dbReference type="SMART" id="SM00898">
    <property type="entry name" value="Fapy_DNA_glyco"/>
    <property type="match status" value="1"/>
</dbReference>
<dbReference type="SMART" id="SM01232">
    <property type="entry name" value="H2TH"/>
    <property type="match status" value="1"/>
</dbReference>
<dbReference type="SUPFAM" id="SSF57716">
    <property type="entry name" value="Glucocorticoid receptor-like (DNA-binding domain)"/>
    <property type="match status" value="1"/>
</dbReference>
<dbReference type="SUPFAM" id="SSF81624">
    <property type="entry name" value="N-terminal domain of MutM-like DNA repair proteins"/>
    <property type="match status" value="1"/>
</dbReference>
<dbReference type="SUPFAM" id="SSF46946">
    <property type="entry name" value="S13-like H2TH domain"/>
    <property type="match status" value="1"/>
</dbReference>
<dbReference type="PROSITE" id="PS51068">
    <property type="entry name" value="FPG_CAT"/>
    <property type="match status" value="1"/>
</dbReference>
<dbReference type="PROSITE" id="PS51066">
    <property type="entry name" value="ZF_FPG_2"/>
    <property type="match status" value="1"/>
</dbReference>
<accession>Q21EE3</accession>